<proteinExistence type="inferred from homology"/>
<reference key="1">
    <citation type="journal article" date="2007" name="Nat. Biotechnol.">
        <title>Complete genome sequence of the erythromycin-producing bacterium Saccharopolyspora erythraea NRRL23338.</title>
        <authorList>
            <person name="Oliynyk M."/>
            <person name="Samborskyy M."/>
            <person name="Lester J.B."/>
            <person name="Mironenko T."/>
            <person name="Scott N."/>
            <person name="Dickens S."/>
            <person name="Haydock S.F."/>
            <person name="Leadlay P.F."/>
        </authorList>
    </citation>
    <scope>NUCLEOTIDE SEQUENCE [LARGE SCALE GENOMIC DNA]</scope>
    <source>
        <strain>ATCC 11635 / DSM 40517 / JCM 4748 / NBRC 13426 / NCIMB 8594 / NRRL 2338</strain>
    </source>
</reference>
<name>COBQ_SACEN</name>
<gene>
    <name evidence="1" type="primary">cobQ</name>
    <name type="ordered locus">SACE_5983</name>
</gene>
<accession>A4FM88</accession>
<evidence type="ECO:0000255" key="1">
    <source>
        <dbReference type="HAMAP-Rule" id="MF_00028"/>
    </source>
</evidence>
<sequence>MNALLIAGTTSDAGKSVVAAGVCRWLARTGARVAPFKAQNMSNNSVVTPDGGEIGRAQAVQAAACGLEPSVRFNPVLLKPGSDRRSQVVVLGHVSGEVTAMSYRERKAALLDTVVSTLDGLRAEHDHVICEGAGSPAEINLRATDIANMGLARAAGLPVLVVGDIDRGGVFAQLFGTLALLDAADQALVGGFVINKFRGDPALLDSGLDRLRALTGRPVHGVLPWAEDLWLDAEDSLSYVADGVVGRPAPPRGSQWLRVAVPRLPRISNATDVEALAAEPGVAVRFVTEPSRLTDADLVVLPGSKSTVADLGWLHDTGLADAIRAHAGAGLPVVGICGGFQMLTRRITDQVESGVGAVDGLGMLDLEIEFEEAKTLRRPSGTAFGEPVDGYEIHHGVPVRRGDDLAGLVRLPGGTAEGGLSGSVAGTHWHGLFENDAFRRRFLTWAAGCAGRDGFVAAGDTSFAEVRAGQLDLLGDLVEKHLDTDAIRRLLEGGAPAGLPLLPPGAGGRAALRSGGGSE</sequence>
<keyword id="KW-0169">Cobalamin biosynthesis</keyword>
<keyword id="KW-0315">Glutamine amidotransferase</keyword>
<keyword id="KW-1185">Reference proteome</keyword>
<comment type="function">
    <text evidence="1">Catalyzes amidations at positions B, D, E, and G on adenosylcobyrinic A,C-diamide. NH(2) groups are provided by glutamine, and one molecule of ATP is hydrogenolyzed for each amidation.</text>
</comment>
<comment type="pathway">
    <text evidence="1">Cofactor biosynthesis; adenosylcobalamin biosynthesis.</text>
</comment>
<comment type="similarity">
    <text evidence="1">Belongs to the CobB/CobQ family. CobQ subfamily.</text>
</comment>
<protein>
    <recommendedName>
        <fullName evidence="1">Cobyric acid synthase</fullName>
    </recommendedName>
</protein>
<organism>
    <name type="scientific">Saccharopolyspora erythraea (strain ATCC 11635 / DSM 40517 / JCM 4748 / NBRC 13426 / NCIMB 8594 / NRRL 2338)</name>
    <dbReference type="NCBI Taxonomy" id="405948"/>
    <lineage>
        <taxon>Bacteria</taxon>
        <taxon>Bacillati</taxon>
        <taxon>Actinomycetota</taxon>
        <taxon>Actinomycetes</taxon>
        <taxon>Pseudonocardiales</taxon>
        <taxon>Pseudonocardiaceae</taxon>
        <taxon>Saccharopolyspora</taxon>
    </lineage>
</organism>
<feature type="chain" id="PRO_0000332385" description="Cobyric acid synthase">
    <location>
        <begin position="1"/>
        <end position="519"/>
    </location>
</feature>
<feature type="domain" description="GATase cobBQ-type" evidence="1">
    <location>
        <begin position="256"/>
        <end position="438"/>
    </location>
</feature>
<feature type="active site" description="Nucleophile" evidence="1">
    <location>
        <position position="337"/>
    </location>
</feature>
<feature type="active site" evidence="1">
    <location>
        <position position="430"/>
    </location>
</feature>
<dbReference type="EMBL" id="AM420293">
    <property type="protein sequence ID" value="CAM05163.1"/>
    <property type="molecule type" value="Genomic_DNA"/>
</dbReference>
<dbReference type="RefSeq" id="WP_009943703.1">
    <property type="nucleotide sequence ID" value="NC_009142.1"/>
</dbReference>
<dbReference type="STRING" id="405948.SACE_5983"/>
<dbReference type="KEGG" id="sen:SACE_5983"/>
<dbReference type="eggNOG" id="COG1492">
    <property type="taxonomic scope" value="Bacteria"/>
</dbReference>
<dbReference type="HOGENOM" id="CLU_019250_2_2_11"/>
<dbReference type="OrthoDB" id="9808302at2"/>
<dbReference type="UniPathway" id="UPA00148"/>
<dbReference type="Proteomes" id="UP000006728">
    <property type="component" value="Chromosome"/>
</dbReference>
<dbReference type="GO" id="GO:0015420">
    <property type="term" value="F:ABC-type vitamin B12 transporter activity"/>
    <property type="evidence" value="ECO:0007669"/>
    <property type="project" value="UniProtKB-UniRule"/>
</dbReference>
<dbReference type="GO" id="GO:0003824">
    <property type="term" value="F:catalytic activity"/>
    <property type="evidence" value="ECO:0007669"/>
    <property type="project" value="InterPro"/>
</dbReference>
<dbReference type="GO" id="GO:0009236">
    <property type="term" value="P:cobalamin biosynthetic process"/>
    <property type="evidence" value="ECO:0007669"/>
    <property type="project" value="UniProtKB-UniRule"/>
</dbReference>
<dbReference type="CDD" id="cd05389">
    <property type="entry name" value="CobQ_N"/>
    <property type="match status" value="1"/>
</dbReference>
<dbReference type="CDD" id="cd01750">
    <property type="entry name" value="GATase1_CobQ"/>
    <property type="match status" value="1"/>
</dbReference>
<dbReference type="Gene3D" id="3.40.50.880">
    <property type="match status" value="1"/>
</dbReference>
<dbReference type="Gene3D" id="3.40.50.300">
    <property type="entry name" value="P-loop containing nucleotide triphosphate hydrolases"/>
    <property type="match status" value="1"/>
</dbReference>
<dbReference type="HAMAP" id="MF_00028">
    <property type="entry name" value="CobQ"/>
    <property type="match status" value="1"/>
</dbReference>
<dbReference type="InterPro" id="IPR029062">
    <property type="entry name" value="Class_I_gatase-like"/>
</dbReference>
<dbReference type="InterPro" id="IPR002586">
    <property type="entry name" value="CobQ/CobB/MinD/ParA_Nub-bd_dom"/>
</dbReference>
<dbReference type="InterPro" id="IPR033949">
    <property type="entry name" value="CobQ_GATase1"/>
</dbReference>
<dbReference type="InterPro" id="IPR047045">
    <property type="entry name" value="CobQ_N"/>
</dbReference>
<dbReference type="InterPro" id="IPR004459">
    <property type="entry name" value="CobQ_synth"/>
</dbReference>
<dbReference type="InterPro" id="IPR011698">
    <property type="entry name" value="GATase_3"/>
</dbReference>
<dbReference type="InterPro" id="IPR027417">
    <property type="entry name" value="P-loop_NTPase"/>
</dbReference>
<dbReference type="NCBIfam" id="TIGR00313">
    <property type="entry name" value="cobQ"/>
    <property type="match status" value="1"/>
</dbReference>
<dbReference type="NCBIfam" id="NF001989">
    <property type="entry name" value="PRK00784.1"/>
    <property type="match status" value="1"/>
</dbReference>
<dbReference type="PANTHER" id="PTHR21343:SF1">
    <property type="entry name" value="COBYRIC ACID SYNTHASE"/>
    <property type="match status" value="1"/>
</dbReference>
<dbReference type="PANTHER" id="PTHR21343">
    <property type="entry name" value="DETHIOBIOTIN SYNTHETASE"/>
    <property type="match status" value="1"/>
</dbReference>
<dbReference type="Pfam" id="PF01656">
    <property type="entry name" value="CbiA"/>
    <property type="match status" value="1"/>
</dbReference>
<dbReference type="Pfam" id="PF07685">
    <property type="entry name" value="GATase_3"/>
    <property type="match status" value="1"/>
</dbReference>
<dbReference type="SUPFAM" id="SSF52317">
    <property type="entry name" value="Class I glutamine amidotransferase-like"/>
    <property type="match status" value="1"/>
</dbReference>
<dbReference type="SUPFAM" id="SSF52540">
    <property type="entry name" value="P-loop containing nucleoside triphosphate hydrolases"/>
    <property type="match status" value="1"/>
</dbReference>
<dbReference type="PROSITE" id="PS51274">
    <property type="entry name" value="GATASE_COBBQ"/>
    <property type="match status" value="1"/>
</dbReference>